<sequence>MQKLIQDITKEQLRTDLPAFRPGDTLRVHVKVVEGNRERIQIFEGVVIKRRGGGISETFTVRKISYGVGVERTFPVHTPKIAKIEVVRYGKVRRAKLYYLRELRGKAARIKEIRR</sequence>
<proteinExistence type="inferred from homology"/>
<evidence type="ECO:0000255" key="1">
    <source>
        <dbReference type="HAMAP-Rule" id="MF_00402"/>
    </source>
</evidence>
<evidence type="ECO:0000305" key="2"/>
<dbReference type="EMBL" id="CP000560">
    <property type="protein sequence ID" value="ABS73950.1"/>
    <property type="molecule type" value="Genomic_DNA"/>
</dbReference>
<dbReference type="RefSeq" id="WP_003154288.1">
    <property type="nucleotide sequence ID" value="NC_009725.2"/>
</dbReference>
<dbReference type="SMR" id="A7Z4M4"/>
<dbReference type="GeneID" id="93080720"/>
<dbReference type="KEGG" id="bay:RBAM_015870"/>
<dbReference type="HOGENOM" id="CLU_103507_2_1_9"/>
<dbReference type="Proteomes" id="UP000001120">
    <property type="component" value="Chromosome"/>
</dbReference>
<dbReference type="GO" id="GO:0022625">
    <property type="term" value="C:cytosolic large ribosomal subunit"/>
    <property type="evidence" value="ECO:0007669"/>
    <property type="project" value="TreeGrafter"/>
</dbReference>
<dbReference type="GO" id="GO:0003735">
    <property type="term" value="F:structural constituent of ribosome"/>
    <property type="evidence" value="ECO:0007669"/>
    <property type="project" value="InterPro"/>
</dbReference>
<dbReference type="GO" id="GO:0006412">
    <property type="term" value="P:translation"/>
    <property type="evidence" value="ECO:0007669"/>
    <property type="project" value="UniProtKB-UniRule"/>
</dbReference>
<dbReference type="FunFam" id="2.30.30.790:FF:000001">
    <property type="entry name" value="50S ribosomal protein L19"/>
    <property type="match status" value="1"/>
</dbReference>
<dbReference type="Gene3D" id="2.30.30.790">
    <property type="match status" value="1"/>
</dbReference>
<dbReference type="HAMAP" id="MF_00402">
    <property type="entry name" value="Ribosomal_bL19"/>
    <property type="match status" value="1"/>
</dbReference>
<dbReference type="InterPro" id="IPR001857">
    <property type="entry name" value="Ribosomal_bL19"/>
</dbReference>
<dbReference type="InterPro" id="IPR018257">
    <property type="entry name" value="Ribosomal_bL19_CS"/>
</dbReference>
<dbReference type="InterPro" id="IPR038657">
    <property type="entry name" value="Ribosomal_bL19_sf"/>
</dbReference>
<dbReference type="InterPro" id="IPR008991">
    <property type="entry name" value="Translation_prot_SH3-like_sf"/>
</dbReference>
<dbReference type="NCBIfam" id="TIGR01024">
    <property type="entry name" value="rplS_bact"/>
    <property type="match status" value="1"/>
</dbReference>
<dbReference type="PANTHER" id="PTHR15680:SF9">
    <property type="entry name" value="LARGE RIBOSOMAL SUBUNIT PROTEIN BL19M"/>
    <property type="match status" value="1"/>
</dbReference>
<dbReference type="PANTHER" id="PTHR15680">
    <property type="entry name" value="RIBOSOMAL PROTEIN L19"/>
    <property type="match status" value="1"/>
</dbReference>
<dbReference type="Pfam" id="PF01245">
    <property type="entry name" value="Ribosomal_L19"/>
    <property type="match status" value="1"/>
</dbReference>
<dbReference type="PIRSF" id="PIRSF002191">
    <property type="entry name" value="Ribosomal_L19"/>
    <property type="match status" value="1"/>
</dbReference>
<dbReference type="PRINTS" id="PR00061">
    <property type="entry name" value="RIBOSOMALL19"/>
</dbReference>
<dbReference type="SUPFAM" id="SSF50104">
    <property type="entry name" value="Translation proteins SH3-like domain"/>
    <property type="match status" value="1"/>
</dbReference>
<dbReference type="PROSITE" id="PS01015">
    <property type="entry name" value="RIBOSOMAL_L19"/>
    <property type="match status" value="1"/>
</dbReference>
<gene>
    <name evidence="1" type="primary">rplS</name>
    <name type="ordered locus">RBAM_015870</name>
</gene>
<reference key="1">
    <citation type="journal article" date="2007" name="Nat. Biotechnol.">
        <title>Comparative analysis of the complete genome sequence of the plant growth-promoting bacterium Bacillus amyloliquefaciens FZB42.</title>
        <authorList>
            <person name="Chen X.H."/>
            <person name="Koumoutsi A."/>
            <person name="Scholz R."/>
            <person name="Eisenreich A."/>
            <person name="Schneider K."/>
            <person name="Heinemeyer I."/>
            <person name="Morgenstern B."/>
            <person name="Voss B."/>
            <person name="Hess W.R."/>
            <person name="Reva O."/>
            <person name="Junge H."/>
            <person name="Voigt B."/>
            <person name="Jungblut P.R."/>
            <person name="Vater J."/>
            <person name="Suessmuth R."/>
            <person name="Liesegang H."/>
            <person name="Strittmatter A."/>
            <person name="Gottschalk G."/>
            <person name="Borriss R."/>
        </authorList>
    </citation>
    <scope>NUCLEOTIDE SEQUENCE [LARGE SCALE GENOMIC DNA]</scope>
    <source>
        <strain>DSM 23117 / BGSC 10A6 / LMG 26770 / FZB42</strain>
    </source>
</reference>
<keyword id="KW-0687">Ribonucleoprotein</keyword>
<keyword id="KW-0689">Ribosomal protein</keyword>
<feature type="chain" id="PRO_1000049634" description="Large ribosomal subunit protein bL19">
    <location>
        <begin position="1"/>
        <end position="115"/>
    </location>
</feature>
<protein>
    <recommendedName>
        <fullName evidence="1">Large ribosomal subunit protein bL19</fullName>
    </recommendedName>
    <alternativeName>
        <fullName evidence="2">50S ribosomal protein L19</fullName>
    </alternativeName>
</protein>
<comment type="function">
    <text evidence="1">This protein is located at the 30S-50S ribosomal subunit interface and may play a role in the structure and function of the aminoacyl-tRNA binding site.</text>
</comment>
<comment type="similarity">
    <text evidence="1">Belongs to the bacterial ribosomal protein bL19 family.</text>
</comment>
<name>RL19_BACVZ</name>
<accession>A7Z4M4</accession>
<organism>
    <name type="scientific">Bacillus velezensis (strain DSM 23117 / BGSC 10A6 / LMG 26770 / FZB42)</name>
    <name type="common">Bacillus amyloliquefaciens subsp. plantarum</name>
    <dbReference type="NCBI Taxonomy" id="326423"/>
    <lineage>
        <taxon>Bacteria</taxon>
        <taxon>Bacillati</taxon>
        <taxon>Bacillota</taxon>
        <taxon>Bacilli</taxon>
        <taxon>Bacillales</taxon>
        <taxon>Bacillaceae</taxon>
        <taxon>Bacillus</taxon>
        <taxon>Bacillus amyloliquefaciens group</taxon>
    </lineage>
</organism>